<protein>
    <recommendedName>
        <fullName>Glutathione S-transferase</fullName>
        <ecNumber>2.5.1.18</ecNumber>
    </recommendedName>
    <alternativeName>
        <fullName>GST class-phi</fullName>
    </alternativeName>
</protein>
<reference key="1">
    <citation type="journal article" date="1994" name="Biochim. Biophys. Acta">
        <title>A glutathione S-transferase (GST) isozyme from broccoli with significant sequence homology to the mammalian theta-class of GSTs.</title>
        <authorList>
            <person name="Lopez M.F."/>
            <person name="Patton W.F."/>
            <person name="Sawlivich W.B."/>
            <person name="Erdjument-Bromage H."/>
            <person name="Barry P."/>
            <person name="Gmyrek K."/>
            <person name="Hines T."/>
            <person name="Tempst P."/>
            <person name="Skea W.M."/>
        </authorList>
    </citation>
    <scope>PROTEIN SEQUENCE</scope>
</reference>
<feature type="chain" id="PRO_0000185840" description="Glutathione S-transferase">
    <location>
        <begin position="1" status="less than"/>
        <end position="76" status="greater than"/>
    </location>
</feature>
<feature type="domain" description="GST N-terminal">
    <location>
        <begin position="1" status="less than"/>
        <end position="40"/>
    </location>
</feature>
<feature type="domain" description="GST C-terminal">
    <location>
        <begin position="41"/>
        <end position="76" status="greater than"/>
    </location>
</feature>
<feature type="non-consecutive residues" evidence="1">
    <location>
        <begin position="40"/>
        <end position="41"/>
    </location>
</feature>
<feature type="non-terminal residue">
    <location>
        <position position="1"/>
    </location>
</feature>
<feature type="non-terminal residue">
    <location>
        <position position="76"/>
    </location>
</feature>
<name>GSTF_BRAOT</name>
<sequence length="76" mass="8268">XVAFETVPVDLMKGEHKQPAYLALQPFGTVPAVVDGDYXLLSAVLDVYEAHLHGYLAGDFVSLADLAHLPFTDYLV</sequence>
<evidence type="ECO:0000305" key="1"/>
<dbReference type="EC" id="2.5.1.18"/>
<dbReference type="PIR" id="S43401">
    <property type="entry name" value="S43401"/>
</dbReference>
<dbReference type="GO" id="GO:0005737">
    <property type="term" value="C:cytoplasm"/>
    <property type="evidence" value="ECO:0007669"/>
    <property type="project" value="UniProtKB-SubCell"/>
</dbReference>
<dbReference type="GO" id="GO:0043295">
    <property type="term" value="F:glutathione binding"/>
    <property type="evidence" value="ECO:0007669"/>
    <property type="project" value="TreeGrafter"/>
</dbReference>
<dbReference type="GO" id="GO:0004364">
    <property type="term" value="F:glutathione transferase activity"/>
    <property type="evidence" value="ECO:0007669"/>
    <property type="project" value="UniProtKB-EC"/>
</dbReference>
<dbReference type="GO" id="GO:0006749">
    <property type="term" value="P:glutathione metabolic process"/>
    <property type="evidence" value="ECO:0007669"/>
    <property type="project" value="TreeGrafter"/>
</dbReference>
<dbReference type="Gene3D" id="1.20.1050.10">
    <property type="match status" value="1"/>
</dbReference>
<dbReference type="InterPro" id="IPR010987">
    <property type="entry name" value="Glutathione-S-Trfase_C-like"/>
</dbReference>
<dbReference type="InterPro" id="IPR036282">
    <property type="entry name" value="Glutathione-S-Trfase_C_sf"/>
</dbReference>
<dbReference type="InterPro" id="IPR004045">
    <property type="entry name" value="Glutathione_S-Trfase_N"/>
</dbReference>
<dbReference type="InterPro" id="IPR004046">
    <property type="entry name" value="GST_C"/>
</dbReference>
<dbReference type="InterPro" id="IPR036249">
    <property type="entry name" value="Thioredoxin-like_sf"/>
</dbReference>
<dbReference type="PANTHER" id="PTHR43900:SF45">
    <property type="entry name" value="GLUTATHIONE S-TRANSFERASE F9"/>
    <property type="match status" value="1"/>
</dbReference>
<dbReference type="PANTHER" id="PTHR43900">
    <property type="entry name" value="GLUTATHIONE S-TRANSFERASE RHO"/>
    <property type="match status" value="1"/>
</dbReference>
<dbReference type="Pfam" id="PF00043">
    <property type="entry name" value="GST_C"/>
    <property type="match status" value="1"/>
</dbReference>
<dbReference type="Pfam" id="PF02798">
    <property type="entry name" value="GST_N"/>
    <property type="match status" value="1"/>
</dbReference>
<dbReference type="SUPFAM" id="SSF47616">
    <property type="entry name" value="GST C-terminal domain-like"/>
    <property type="match status" value="1"/>
</dbReference>
<dbReference type="SUPFAM" id="SSF52833">
    <property type="entry name" value="Thioredoxin-like"/>
    <property type="match status" value="1"/>
</dbReference>
<dbReference type="PROSITE" id="PS50405">
    <property type="entry name" value="GST_CTER"/>
    <property type="match status" value="1"/>
</dbReference>
<dbReference type="PROSITE" id="PS50404">
    <property type="entry name" value="GST_NTER"/>
    <property type="match status" value="1"/>
</dbReference>
<keyword id="KW-0963">Cytoplasm</keyword>
<keyword id="KW-0903">Direct protein sequencing</keyword>
<keyword id="KW-0808">Transferase</keyword>
<proteinExistence type="evidence at protein level"/>
<comment type="function">
    <text>Conjugation of reduced glutathione to a wide number of exogenous and endogenous hydrophobic electrophiles.</text>
</comment>
<comment type="catalytic activity">
    <reaction>
        <text>RX + glutathione = an S-substituted glutathione + a halide anion + H(+)</text>
        <dbReference type="Rhea" id="RHEA:16437"/>
        <dbReference type="ChEBI" id="CHEBI:15378"/>
        <dbReference type="ChEBI" id="CHEBI:16042"/>
        <dbReference type="ChEBI" id="CHEBI:17792"/>
        <dbReference type="ChEBI" id="CHEBI:57925"/>
        <dbReference type="ChEBI" id="CHEBI:90779"/>
        <dbReference type="EC" id="2.5.1.18"/>
    </reaction>
</comment>
<comment type="subcellular location">
    <subcellularLocation>
        <location>Cytoplasm</location>
    </subcellularLocation>
</comment>
<comment type="similarity">
    <text evidence="1">Belongs to the GST superfamily. Theta family.</text>
</comment>
<organism>
    <name type="scientific">Brassica oleracea var. italica</name>
    <name type="common">Broccoli</name>
    <dbReference type="NCBI Taxonomy" id="36774"/>
    <lineage>
        <taxon>Eukaryota</taxon>
        <taxon>Viridiplantae</taxon>
        <taxon>Streptophyta</taxon>
        <taxon>Embryophyta</taxon>
        <taxon>Tracheophyta</taxon>
        <taxon>Spermatophyta</taxon>
        <taxon>Magnoliopsida</taxon>
        <taxon>eudicotyledons</taxon>
        <taxon>Gunneridae</taxon>
        <taxon>Pentapetalae</taxon>
        <taxon>rosids</taxon>
        <taxon>malvids</taxon>
        <taxon>Brassicales</taxon>
        <taxon>Brassicaceae</taxon>
        <taxon>Brassiceae</taxon>
        <taxon>Brassica</taxon>
    </lineage>
</organism>
<accession>P48438</accession>